<accession>Q4ZWV3</accession>
<comment type="function">
    <text evidence="1">Forms oxaloacetate, a four-carbon dicarboxylic acid source for the tricarboxylic acid cycle.</text>
</comment>
<comment type="catalytic activity">
    <reaction evidence="1">
        <text>oxaloacetate + phosphate = phosphoenolpyruvate + hydrogencarbonate</text>
        <dbReference type="Rhea" id="RHEA:28370"/>
        <dbReference type="ChEBI" id="CHEBI:16452"/>
        <dbReference type="ChEBI" id="CHEBI:17544"/>
        <dbReference type="ChEBI" id="CHEBI:43474"/>
        <dbReference type="ChEBI" id="CHEBI:58702"/>
        <dbReference type="EC" id="4.1.1.31"/>
    </reaction>
</comment>
<comment type="cofactor">
    <cofactor evidence="1">
        <name>Mg(2+)</name>
        <dbReference type="ChEBI" id="CHEBI:18420"/>
    </cofactor>
</comment>
<comment type="similarity">
    <text evidence="1">Belongs to the PEPCase type 1 family.</text>
</comment>
<reference key="1">
    <citation type="journal article" date="2005" name="Proc. Natl. Acad. Sci. U.S.A.">
        <title>Comparison of the complete genome sequences of Pseudomonas syringae pv. syringae B728a and pv. tomato DC3000.</title>
        <authorList>
            <person name="Feil H."/>
            <person name="Feil W.S."/>
            <person name="Chain P."/>
            <person name="Larimer F."/>
            <person name="Dibartolo G."/>
            <person name="Copeland A."/>
            <person name="Lykidis A."/>
            <person name="Trong S."/>
            <person name="Nolan M."/>
            <person name="Goltsman E."/>
            <person name="Thiel J."/>
            <person name="Malfatti S."/>
            <person name="Loper J.E."/>
            <person name="Lapidus A."/>
            <person name="Detter J.C."/>
            <person name="Land M."/>
            <person name="Richardson P.M."/>
            <person name="Kyrpides N.C."/>
            <person name="Ivanova N."/>
            <person name="Lindow S.E."/>
        </authorList>
    </citation>
    <scope>NUCLEOTIDE SEQUENCE [LARGE SCALE GENOMIC DNA]</scope>
    <source>
        <strain>B728a</strain>
    </source>
</reference>
<feature type="chain" id="PRO_1000025581" description="Phosphoenolpyruvate carboxylase">
    <location>
        <begin position="1"/>
        <end position="878"/>
    </location>
</feature>
<feature type="active site" evidence="1">
    <location>
        <position position="140"/>
    </location>
</feature>
<feature type="active site" evidence="1">
    <location>
        <position position="545"/>
    </location>
</feature>
<keyword id="KW-0120">Carbon dioxide fixation</keyword>
<keyword id="KW-0456">Lyase</keyword>
<keyword id="KW-0460">Magnesium</keyword>
<sequence length="878" mass="97595">MADIDARLREDVHLLGELLGNTIREQRGAEFLDKIERIRKGAKAGRRGSAEGAEQLSSSVDGLGDDELLPVARAFNQFLNLANIAEQYQLMHRRDDKQPLPFESRVLPELLDRLKAEGHSPDALARQLSKLEIDLVLTAHPTEVARRTLIQKYDAIAAQLAALDHRDLNSIERTQITSRLQRLIAEAWHTEEIRRIRPTPVDEAKWGFAVIEHSLWHAIPNYLRKADHALHAATGLHLPLEAAPIRFASWMGGDRDGNPNVTAAVTREVLLLARWMAADLYLRDVDNLAAELSMQQASDALRASVGDSAEPYRAELKRLRERLRATRNWANASLSETLPAPEAVLRDNRELLDPLLLCFQSLHECGMGVIADGPLLDCLRRAVTFGLFLVRLDVRQDSSRHCAAMTEITDYLGLGRYEEWDEQTRIDFLLRELNNRRPLLPSYFKPAADTAEVLATCREVAAAPAASLGSYVISMAGSASDVLAVQLLLKESGLQRPMRVVPLFETLADLDNAGPVIETLLGLPGYRSRLHGPQEVMIGYSDSAKDAGTTAAAWAQYRAQERLVEICREQQVELLLFHGRGGTVGRGGGPAHAAILSQPPGSVAGRFRTTEQGEMIRFKFGLPDIAEQNLNLYLAAVLEATLLPPPPPQPAWRTMMDQMADDGVSAYRAVVRENPEFVEYFRQATPEQELGRLPLGSRPAKRREGGVESLRAIPWIFAWTQTRLMLPAWLGWEAALSKALERGEGEVLAQMREQWPFFRTRIDMLEMVLAKADADIARLYDERLVSAELQHLGAHLRDLLSQACNVVLGLTGQTQLLAHSPETLEFISLRNTYLDPLHLLQAELLSRSRNREASLDSPLELALLVSVAGIAAGLRNTG</sequence>
<gene>
    <name evidence="1" type="primary">ppc</name>
    <name type="ordered locus">Psyr_1318</name>
</gene>
<organism>
    <name type="scientific">Pseudomonas syringae pv. syringae (strain B728a)</name>
    <dbReference type="NCBI Taxonomy" id="205918"/>
    <lineage>
        <taxon>Bacteria</taxon>
        <taxon>Pseudomonadati</taxon>
        <taxon>Pseudomonadota</taxon>
        <taxon>Gammaproteobacteria</taxon>
        <taxon>Pseudomonadales</taxon>
        <taxon>Pseudomonadaceae</taxon>
        <taxon>Pseudomonas</taxon>
        <taxon>Pseudomonas syringae</taxon>
    </lineage>
</organism>
<proteinExistence type="inferred from homology"/>
<dbReference type="EC" id="4.1.1.31" evidence="1"/>
<dbReference type="EMBL" id="CP000075">
    <property type="protein sequence ID" value="AAY36369.1"/>
    <property type="molecule type" value="Genomic_DNA"/>
</dbReference>
<dbReference type="RefSeq" id="WP_011266958.1">
    <property type="nucleotide sequence ID" value="NC_007005.1"/>
</dbReference>
<dbReference type="RefSeq" id="YP_234407.1">
    <property type="nucleotide sequence ID" value="NC_007005.1"/>
</dbReference>
<dbReference type="SMR" id="Q4ZWV3"/>
<dbReference type="STRING" id="205918.Psyr_1318"/>
<dbReference type="KEGG" id="psb:Psyr_1318"/>
<dbReference type="PATRIC" id="fig|205918.7.peg.1351"/>
<dbReference type="eggNOG" id="COG2352">
    <property type="taxonomic scope" value="Bacteria"/>
</dbReference>
<dbReference type="HOGENOM" id="CLU_006557_2_0_6"/>
<dbReference type="OrthoDB" id="9768133at2"/>
<dbReference type="Proteomes" id="UP000000426">
    <property type="component" value="Chromosome"/>
</dbReference>
<dbReference type="GO" id="GO:0005829">
    <property type="term" value="C:cytosol"/>
    <property type="evidence" value="ECO:0007669"/>
    <property type="project" value="TreeGrafter"/>
</dbReference>
<dbReference type="GO" id="GO:0000287">
    <property type="term" value="F:magnesium ion binding"/>
    <property type="evidence" value="ECO:0007669"/>
    <property type="project" value="UniProtKB-UniRule"/>
</dbReference>
<dbReference type="GO" id="GO:0008964">
    <property type="term" value="F:phosphoenolpyruvate carboxylase activity"/>
    <property type="evidence" value="ECO:0007669"/>
    <property type="project" value="UniProtKB-UniRule"/>
</dbReference>
<dbReference type="GO" id="GO:0015977">
    <property type="term" value="P:carbon fixation"/>
    <property type="evidence" value="ECO:0007669"/>
    <property type="project" value="UniProtKB-UniRule"/>
</dbReference>
<dbReference type="GO" id="GO:0006107">
    <property type="term" value="P:oxaloacetate metabolic process"/>
    <property type="evidence" value="ECO:0007669"/>
    <property type="project" value="UniProtKB-UniRule"/>
</dbReference>
<dbReference type="GO" id="GO:0006099">
    <property type="term" value="P:tricarboxylic acid cycle"/>
    <property type="evidence" value="ECO:0007669"/>
    <property type="project" value="InterPro"/>
</dbReference>
<dbReference type="Gene3D" id="1.20.1440.90">
    <property type="entry name" value="Phosphoenolpyruvate/pyruvate domain"/>
    <property type="match status" value="1"/>
</dbReference>
<dbReference type="HAMAP" id="MF_00595">
    <property type="entry name" value="PEPcase_type1"/>
    <property type="match status" value="1"/>
</dbReference>
<dbReference type="InterPro" id="IPR021135">
    <property type="entry name" value="PEP_COase"/>
</dbReference>
<dbReference type="InterPro" id="IPR022805">
    <property type="entry name" value="PEP_COase_bac/pln-type"/>
</dbReference>
<dbReference type="InterPro" id="IPR018129">
    <property type="entry name" value="PEP_COase_Lys_AS"/>
</dbReference>
<dbReference type="InterPro" id="IPR033129">
    <property type="entry name" value="PEPCASE_His_AS"/>
</dbReference>
<dbReference type="InterPro" id="IPR015813">
    <property type="entry name" value="Pyrv/PenolPyrv_kinase-like_dom"/>
</dbReference>
<dbReference type="NCBIfam" id="NF000584">
    <property type="entry name" value="PRK00009.1"/>
    <property type="match status" value="1"/>
</dbReference>
<dbReference type="PANTHER" id="PTHR30523">
    <property type="entry name" value="PHOSPHOENOLPYRUVATE CARBOXYLASE"/>
    <property type="match status" value="1"/>
</dbReference>
<dbReference type="PANTHER" id="PTHR30523:SF6">
    <property type="entry name" value="PHOSPHOENOLPYRUVATE CARBOXYLASE"/>
    <property type="match status" value="1"/>
</dbReference>
<dbReference type="Pfam" id="PF00311">
    <property type="entry name" value="PEPcase"/>
    <property type="match status" value="1"/>
</dbReference>
<dbReference type="PRINTS" id="PR00150">
    <property type="entry name" value="PEPCARBXLASE"/>
</dbReference>
<dbReference type="SUPFAM" id="SSF51621">
    <property type="entry name" value="Phosphoenolpyruvate/pyruvate domain"/>
    <property type="match status" value="1"/>
</dbReference>
<dbReference type="PROSITE" id="PS00781">
    <property type="entry name" value="PEPCASE_1"/>
    <property type="match status" value="1"/>
</dbReference>
<dbReference type="PROSITE" id="PS00393">
    <property type="entry name" value="PEPCASE_2"/>
    <property type="match status" value="1"/>
</dbReference>
<protein>
    <recommendedName>
        <fullName evidence="1">Phosphoenolpyruvate carboxylase</fullName>
        <shortName evidence="1">PEPC</shortName>
        <shortName evidence="1">PEPCase</shortName>
        <ecNumber evidence="1">4.1.1.31</ecNumber>
    </recommendedName>
</protein>
<name>CAPP_PSEU2</name>
<evidence type="ECO:0000255" key="1">
    <source>
        <dbReference type="HAMAP-Rule" id="MF_00595"/>
    </source>
</evidence>